<dbReference type="EC" id="6.3.4.5" evidence="1"/>
<dbReference type="EMBL" id="CP000076">
    <property type="protein sequence ID" value="AAY94083.1"/>
    <property type="molecule type" value="Genomic_DNA"/>
</dbReference>
<dbReference type="RefSeq" id="WP_011063107.1">
    <property type="nucleotide sequence ID" value="NC_004129.6"/>
</dbReference>
<dbReference type="SMR" id="Q4K749"/>
<dbReference type="STRING" id="220664.PFL_4853"/>
<dbReference type="KEGG" id="pfl:PFL_4853"/>
<dbReference type="PATRIC" id="fig|220664.5.peg.4967"/>
<dbReference type="eggNOG" id="COG0137">
    <property type="taxonomic scope" value="Bacteria"/>
</dbReference>
<dbReference type="HOGENOM" id="CLU_032784_4_2_6"/>
<dbReference type="UniPathway" id="UPA00068">
    <property type="reaction ID" value="UER00113"/>
</dbReference>
<dbReference type="Proteomes" id="UP000008540">
    <property type="component" value="Chromosome"/>
</dbReference>
<dbReference type="GO" id="GO:0005737">
    <property type="term" value="C:cytoplasm"/>
    <property type="evidence" value="ECO:0007669"/>
    <property type="project" value="UniProtKB-SubCell"/>
</dbReference>
<dbReference type="GO" id="GO:0004055">
    <property type="term" value="F:argininosuccinate synthase activity"/>
    <property type="evidence" value="ECO:0007669"/>
    <property type="project" value="UniProtKB-UniRule"/>
</dbReference>
<dbReference type="GO" id="GO:0005524">
    <property type="term" value="F:ATP binding"/>
    <property type="evidence" value="ECO:0007669"/>
    <property type="project" value="UniProtKB-UniRule"/>
</dbReference>
<dbReference type="GO" id="GO:0000053">
    <property type="term" value="P:argininosuccinate metabolic process"/>
    <property type="evidence" value="ECO:0007669"/>
    <property type="project" value="TreeGrafter"/>
</dbReference>
<dbReference type="GO" id="GO:0006526">
    <property type="term" value="P:L-arginine biosynthetic process"/>
    <property type="evidence" value="ECO:0007669"/>
    <property type="project" value="UniProtKB-UniRule"/>
</dbReference>
<dbReference type="GO" id="GO:0000050">
    <property type="term" value="P:urea cycle"/>
    <property type="evidence" value="ECO:0007669"/>
    <property type="project" value="TreeGrafter"/>
</dbReference>
<dbReference type="CDD" id="cd01999">
    <property type="entry name" value="ASS"/>
    <property type="match status" value="1"/>
</dbReference>
<dbReference type="FunFam" id="1.20.5.470:FF:000001">
    <property type="entry name" value="Argininosuccinate synthase"/>
    <property type="match status" value="1"/>
</dbReference>
<dbReference type="FunFam" id="3.40.50.620:FF:000019">
    <property type="entry name" value="Argininosuccinate synthase"/>
    <property type="match status" value="1"/>
</dbReference>
<dbReference type="FunFam" id="3.90.1260.10:FF:000001">
    <property type="entry name" value="Argininosuccinate synthase"/>
    <property type="match status" value="1"/>
</dbReference>
<dbReference type="Gene3D" id="3.90.1260.10">
    <property type="entry name" value="Argininosuccinate synthetase, chain A, domain 2"/>
    <property type="match status" value="1"/>
</dbReference>
<dbReference type="Gene3D" id="3.40.50.620">
    <property type="entry name" value="HUPs"/>
    <property type="match status" value="1"/>
</dbReference>
<dbReference type="Gene3D" id="1.20.5.470">
    <property type="entry name" value="Single helix bin"/>
    <property type="match status" value="1"/>
</dbReference>
<dbReference type="HAMAP" id="MF_00005">
    <property type="entry name" value="Arg_succ_synth_type1"/>
    <property type="match status" value="1"/>
</dbReference>
<dbReference type="InterPro" id="IPR048268">
    <property type="entry name" value="Arginosuc_syn_C"/>
</dbReference>
<dbReference type="InterPro" id="IPR048267">
    <property type="entry name" value="Arginosuc_syn_N"/>
</dbReference>
<dbReference type="InterPro" id="IPR001518">
    <property type="entry name" value="Arginosuc_synth"/>
</dbReference>
<dbReference type="InterPro" id="IPR018223">
    <property type="entry name" value="Arginosuc_synth_CS"/>
</dbReference>
<dbReference type="InterPro" id="IPR023434">
    <property type="entry name" value="Arginosuc_synth_type_1_subfam"/>
</dbReference>
<dbReference type="InterPro" id="IPR024074">
    <property type="entry name" value="AS_cat/multimer_dom_body"/>
</dbReference>
<dbReference type="InterPro" id="IPR014729">
    <property type="entry name" value="Rossmann-like_a/b/a_fold"/>
</dbReference>
<dbReference type="NCBIfam" id="TIGR00032">
    <property type="entry name" value="argG"/>
    <property type="match status" value="1"/>
</dbReference>
<dbReference type="NCBIfam" id="NF001770">
    <property type="entry name" value="PRK00509.1"/>
    <property type="match status" value="1"/>
</dbReference>
<dbReference type="PANTHER" id="PTHR11587">
    <property type="entry name" value="ARGININOSUCCINATE SYNTHASE"/>
    <property type="match status" value="1"/>
</dbReference>
<dbReference type="PANTHER" id="PTHR11587:SF2">
    <property type="entry name" value="ARGININOSUCCINATE SYNTHASE"/>
    <property type="match status" value="1"/>
</dbReference>
<dbReference type="Pfam" id="PF20979">
    <property type="entry name" value="Arginosuc_syn_C"/>
    <property type="match status" value="1"/>
</dbReference>
<dbReference type="Pfam" id="PF00764">
    <property type="entry name" value="Arginosuc_synth"/>
    <property type="match status" value="1"/>
</dbReference>
<dbReference type="SUPFAM" id="SSF52402">
    <property type="entry name" value="Adenine nucleotide alpha hydrolases-like"/>
    <property type="match status" value="1"/>
</dbReference>
<dbReference type="SUPFAM" id="SSF69864">
    <property type="entry name" value="Argininosuccinate synthetase, C-terminal domain"/>
    <property type="match status" value="1"/>
</dbReference>
<dbReference type="PROSITE" id="PS00564">
    <property type="entry name" value="ARGININOSUCCIN_SYN_1"/>
    <property type="match status" value="1"/>
</dbReference>
<dbReference type="PROSITE" id="PS00565">
    <property type="entry name" value="ARGININOSUCCIN_SYN_2"/>
    <property type="match status" value="1"/>
</dbReference>
<evidence type="ECO:0000255" key="1">
    <source>
        <dbReference type="HAMAP-Rule" id="MF_00005"/>
    </source>
</evidence>
<comment type="catalytic activity">
    <reaction evidence="1">
        <text>L-citrulline + L-aspartate + ATP = 2-(N(omega)-L-arginino)succinate + AMP + diphosphate + H(+)</text>
        <dbReference type="Rhea" id="RHEA:10932"/>
        <dbReference type="ChEBI" id="CHEBI:15378"/>
        <dbReference type="ChEBI" id="CHEBI:29991"/>
        <dbReference type="ChEBI" id="CHEBI:30616"/>
        <dbReference type="ChEBI" id="CHEBI:33019"/>
        <dbReference type="ChEBI" id="CHEBI:57472"/>
        <dbReference type="ChEBI" id="CHEBI:57743"/>
        <dbReference type="ChEBI" id="CHEBI:456215"/>
        <dbReference type="EC" id="6.3.4.5"/>
    </reaction>
</comment>
<comment type="pathway">
    <text evidence="1">Amino-acid biosynthesis; L-arginine biosynthesis; L-arginine from L-ornithine and carbamoyl phosphate: step 2/3.</text>
</comment>
<comment type="subunit">
    <text evidence="1">Homotetramer.</text>
</comment>
<comment type="subcellular location">
    <subcellularLocation>
        <location evidence="1">Cytoplasm</location>
    </subcellularLocation>
</comment>
<comment type="similarity">
    <text evidence="1">Belongs to the argininosuccinate synthase family. Type 1 subfamily.</text>
</comment>
<accession>Q4K749</accession>
<protein>
    <recommendedName>
        <fullName evidence="1">Argininosuccinate synthase</fullName>
        <ecNumber evidence="1">6.3.4.5</ecNumber>
    </recommendedName>
    <alternativeName>
        <fullName evidence="1">Citrulline--aspartate ligase</fullName>
    </alternativeName>
</protein>
<reference key="1">
    <citation type="journal article" date="2005" name="Nat. Biotechnol.">
        <title>Complete genome sequence of the plant commensal Pseudomonas fluorescens Pf-5.</title>
        <authorList>
            <person name="Paulsen I.T."/>
            <person name="Press C.M."/>
            <person name="Ravel J."/>
            <person name="Kobayashi D.Y."/>
            <person name="Myers G.S.A."/>
            <person name="Mavrodi D.V."/>
            <person name="DeBoy R.T."/>
            <person name="Seshadri R."/>
            <person name="Ren Q."/>
            <person name="Madupu R."/>
            <person name="Dodson R.J."/>
            <person name="Durkin A.S."/>
            <person name="Brinkac L.M."/>
            <person name="Daugherty S.C."/>
            <person name="Sullivan S.A."/>
            <person name="Rosovitz M.J."/>
            <person name="Gwinn M.L."/>
            <person name="Zhou L."/>
            <person name="Schneider D.J."/>
            <person name="Cartinhour S.W."/>
            <person name="Nelson W.C."/>
            <person name="Weidman J."/>
            <person name="Watkins K."/>
            <person name="Tran K."/>
            <person name="Khouri H."/>
            <person name="Pierson E.A."/>
            <person name="Pierson L.S. III"/>
            <person name="Thomashow L.S."/>
            <person name="Loper J.E."/>
        </authorList>
    </citation>
    <scope>NUCLEOTIDE SEQUENCE [LARGE SCALE GENOMIC DNA]</scope>
    <source>
        <strain>ATCC BAA-477 / NRRL B-23932 / Pf-5</strain>
    </source>
</reference>
<gene>
    <name evidence="1" type="primary">argG</name>
    <name type="ordered locus">PFL_4853</name>
</gene>
<keyword id="KW-0028">Amino-acid biosynthesis</keyword>
<keyword id="KW-0055">Arginine biosynthesis</keyword>
<keyword id="KW-0067">ATP-binding</keyword>
<keyword id="KW-0963">Cytoplasm</keyword>
<keyword id="KW-0436">Ligase</keyword>
<keyword id="KW-0547">Nucleotide-binding</keyword>
<sequence>MADVNKVVLAYSGGLDTSVILKWLQDTYNCEVVTFTADLGQGEEVEPARAKAQAMGVKEIYIDDLREEFVRDFVFPMFRANTVYEGEYLLGTSIARPLIAKRLIEIANETGADAISHGATGKGNDQVRFELGAYALKPGVKVIAPWREWDLLSREKLMDYAEKHGIPIERHGKKKSPYSMDANLLHISYEGGVLEDTWTEHEEDMWRWTVSPEKAPDTPQYLELTYRNGDIVALDGVEMTPATVLATLNRIGGEHGIGRLDIVENRYVGMKSRGCYETPGGTIMLRAHRAIESITLDREVAHLKDELMPKYASLIYTGYWWSPERLMLQQMIDASQAHVNGVVRLKLYKGNVIVTGRKSDESLFDANIATFEEDGGAYNQADAAGFIKLNALRMRIAANKGRTLV</sequence>
<organism>
    <name type="scientific">Pseudomonas fluorescens (strain ATCC BAA-477 / NRRL B-23932 / Pf-5)</name>
    <dbReference type="NCBI Taxonomy" id="220664"/>
    <lineage>
        <taxon>Bacteria</taxon>
        <taxon>Pseudomonadati</taxon>
        <taxon>Pseudomonadota</taxon>
        <taxon>Gammaproteobacteria</taxon>
        <taxon>Pseudomonadales</taxon>
        <taxon>Pseudomonadaceae</taxon>
        <taxon>Pseudomonas</taxon>
    </lineage>
</organism>
<name>ASSY_PSEF5</name>
<feature type="chain" id="PRO_0000263954" description="Argininosuccinate synthase">
    <location>
        <begin position="1"/>
        <end position="405"/>
    </location>
</feature>
<feature type="binding site" evidence="1">
    <location>
        <begin position="10"/>
        <end position="18"/>
    </location>
    <ligand>
        <name>ATP</name>
        <dbReference type="ChEBI" id="CHEBI:30616"/>
    </ligand>
</feature>
<feature type="binding site" evidence="1">
    <location>
        <position position="37"/>
    </location>
    <ligand>
        <name>ATP</name>
        <dbReference type="ChEBI" id="CHEBI:30616"/>
    </ligand>
</feature>
<feature type="binding site" evidence="1">
    <location>
        <position position="88"/>
    </location>
    <ligand>
        <name>L-citrulline</name>
        <dbReference type="ChEBI" id="CHEBI:57743"/>
    </ligand>
</feature>
<feature type="binding site" evidence="1">
    <location>
        <position position="93"/>
    </location>
    <ligand>
        <name>L-citrulline</name>
        <dbReference type="ChEBI" id="CHEBI:57743"/>
    </ligand>
</feature>
<feature type="binding site" evidence="1">
    <location>
        <position position="118"/>
    </location>
    <ligand>
        <name>ATP</name>
        <dbReference type="ChEBI" id="CHEBI:30616"/>
    </ligand>
</feature>
<feature type="binding site" evidence="1">
    <location>
        <position position="120"/>
    </location>
    <ligand>
        <name>L-aspartate</name>
        <dbReference type="ChEBI" id="CHEBI:29991"/>
    </ligand>
</feature>
<feature type="binding site" evidence="1">
    <location>
        <position position="124"/>
    </location>
    <ligand>
        <name>L-aspartate</name>
        <dbReference type="ChEBI" id="CHEBI:29991"/>
    </ligand>
</feature>
<feature type="binding site" evidence="1">
    <location>
        <position position="124"/>
    </location>
    <ligand>
        <name>L-citrulline</name>
        <dbReference type="ChEBI" id="CHEBI:57743"/>
    </ligand>
</feature>
<feature type="binding site" evidence="1">
    <location>
        <position position="125"/>
    </location>
    <ligand>
        <name>L-aspartate</name>
        <dbReference type="ChEBI" id="CHEBI:29991"/>
    </ligand>
</feature>
<feature type="binding site" evidence="1">
    <location>
        <position position="128"/>
    </location>
    <ligand>
        <name>L-citrulline</name>
        <dbReference type="ChEBI" id="CHEBI:57743"/>
    </ligand>
</feature>
<feature type="binding site" evidence="1">
    <location>
        <position position="179"/>
    </location>
    <ligand>
        <name>L-citrulline</name>
        <dbReference type="ChEBI" id="CHEBI:57743"/>
    </ligand>
</feature>
<feature type="binding site" evidence="1">
    <location>
        <position position="188"/>
    </location>
    <ligand>
        <name>L-citrulline</name>
        <dbReference type="ChEBI" id="CHEBI:57743"/>
    </ligand>
</feature>
<feature type="binding site" evidence="1">
    <location>
        <position position="264"/>
    </location>
    <ligand>
        <name>L-citrulline</name>
        <dbReference type="ChEBI" id="CHEBI:57743"/>
    </ligand>
</feature>
<feature type="binding site" evidence="1">
    <location>
        <position position="276"/>
    </location>
    <ligand>
        <name>L-citrulline</name>
        <dbReference type="ChEBI" id="CHEBI:57743"/>
    </ligand>
</feature>
<proteinExistence type="inferred from homology"/>